<evidence type="ECO:0000255" key="1">
    <source>
        <dbReference type="HAMAP-Rule" id="MF_00253"/>
    </source>
</evidence>
<dbReference type="EC" id="6.1.1.14" evidence="1"/>
<dbReference type="EMBL" id="AE015929">
    <property type="protein sequence ID" value="AAO04851.1"/>
    <property type="molecule type" value="Genomic_DNA"/>
</dbReference>
<dbReference type="RefSeq" id="NP_764807.1">
    <property type="nucleotide sequence ID" value="NC_004461.1"/>
</dbReference>
<dbReference type="RefSeq" id="WP_002456487.1">
    <property type="nucleotide sequence ID" value="NZ_WBME01000008.1"/>
</dbReference>
<dbReference type="SMR" id="Q8CSD5"/>
<dbReference type="KEGG" id="sep:SE_1252"/>
<dbReference type="PATRIC" id="fig|176280.10.peg.1220"/>
<dbReference type="eggNOG" id="COG0423">
    <property type="taxonomic scope" value="Bacteria"/>
</dbReference>
<dbReference type="HOGENOM" id="CLU_015515_2_1_9"/>
<dbReference type="OrthoDB" id="9760853at2"/>
<dbReference type="Proteomes" id="UP000001411">
    <property type="component" value="Chromosome"/>
</dbReference>
<dbReference type="GO" id="GO:0005737">
    <property type="term" value="C:cytoplasm"/>
    <property type="evidence" value="ECO:0007669"/>
    <property type="project" value="UniProtKB-SubCell"/>
</dbReference>
<dbReference type="GO" id="GO:0005524">
    <property type="term" value="F:ATP binding"/>
    <property type="evidence" value="ECO:0007669"/>
    <property type="project" value="UniProtKB-UniRule"/>
</dbReference>
<dbReference type="GO" id="GO:0140096">
    <property type="term" value="F:catalytic activity, acting on a protein"/>
    <property type="evidence" value="ECO:0007669"/>
    <property type="project" value="UniProtKB-ARBA"/>
</dbReference>
<dbReference type="GO" id="GO:0004820">
    <property type="term" value="F:glycine-tRNA ligase activity"/>
    <property type="evidence" value="ECO:0000250"/>
    <property type="project" value="UniProtKB"/>
</dbReference>
<dbReference type="GO" id="GO:0046983">
    <property type="term" value="F:protein dimerization activity"/>
    <property type="evidence" value="ECO:0000250"/>
    <property type="project" value="UniProtKB"/>
</dbReference>
<dbReference type="GO" id="GO:0016740">
    <property type="term" value="F:transferase activity"/>
    <property type="evidence" value="ECO:0007669"/>
    <property type="project" value="UniProtKB-ARBA"/>
</dbReference>
<dbReference type="GO" id="GO:0006426">
    <property type="term" value="P:glycyl-tRNA aminoacylation"/>
    <property type="evidence" value="ECO:0007669"/>
    <property type="project" value="UniProtKB-UniRule"/>
</dbReference>
<dbReference type="CDD" id="cd00774">
    <property type="entry name" value="GlyRS-like_core"/>
    <property type="match status" value="1"/>
</dbReference>
<dbReference type="CDD" id="cd00858">
    <property type="entry name" value="GlyRS_anticodon"/>
    <property type="match status" value="1"/>
</dbReference>
<dbReference type="FunFam" id="3.40.50.800:FF:000002">
    <property type="entry name" value="Glycine--tRNA ligase"/>
    <property type="match status" value="1"/>
</dbReference>
<dbReference type="Gene3D" id="3.30.40.230">
    <property type="match status" value="1"/>
</dbReference>
<dbReference type="Gene3D" id="3.40.50.800">
    <property type="entry name" value="Anticodon-binding domain"/>
    <property type="match status" value="1"/>
</dbReference>
<dbReference type="Gene3D" id="3.30.930.10">
    <property type="entry name" value="Bira Bifunctional Protein, Domain 2"/>
    <property type="match status" value="1"/>
</dbReference>
<dbReference type="HAMAP" id="MF_00253_B">
    <property type="entry name" value="Gly_tRNA_synth_B"/>
    <property type="match status" value="1"/>
</dbReference>
<dbReference type="InterPro" id="IPR002314">
    <property type="entry name" value="aa-tRNA-synt_IIb"/>
</dbReference>
<dbReference type="InterPro" id="IPR006195">
    <property type="entry name" value="aa-tRNA-synth_II"/>
</dbReference>
<dbReference type="InterPro" id="IPR045864">
    <property type="entry name" value="aa-tRNA-synth_II/BPL/LPL"/>
</dbReference>
<dbReference type="InterPro" id="IPR004154">
    <property type="entry name" value="Anticodon-bd"/>
</dbReference>
<dbReference type="InterPro" id="IPR036621">
    <property type="entry name" value="Anticodon-bd_dom_sf"/>
</dbReference>
<dbReference type="InterPro" id="IPR027031">
    <property type="entry name" value="Gly-tRNA_synthase/POLG2"/>
</dbReference>
<dbReference type="InterPro" id="IPR022961">
    <property type="entry name" value="Gly_tRNA_ligase_bac"/>
</dbReference>
<dbReference type="InterPro" id="IPR033731">
    <property type="entry name" value="GlyRS-like_core"/>
</dbReference>
<dbReference type="InterPro" id="IPR002315">
    <property type="entry name" value="tRNA-synt_gly"/>
</dbReference>
<dbReference type="NCBIfam" id="TIGR00389">
    <property type="entry name" value="glyS_dimeric"/>
    <property type="match status" value="1"/>
</dbReference>
<dbReference type="NCBIfam" id="NF003211">
    <property type="entry name" value="PRK04173.1"/>
    <property type="match status" value="1"/>
</dbReference>
<dbReference type="PANTHER" id="PTHR10745:SF8">
    <property type="entry name" value="DNA POLYMERASE SUBUNIT GAMMA-2, MITOCHONDRIAL"/>
    <property type="match status" value="1"/>
</dbReference>
<dbReference type="PANTHER" id="PTHR10745">
    <property type="entry name" value="GLYCYL-TRNA SYNTHETASE/DNA POLYMERASE SUBUNIT GAMMA-2"/>
    <property type="match status" value="1"/>
</dbReference>
<dbReference type="Pfam" id="PF03129">
    <property type="entry name" value="HGTP_anticodon"/>
    <property type="match status" value="1"/>
</dbReference>
<dbReference type="Pfam" id="PF00587">
    <property type="entry name" value="tRNA-synt_2b"/>
    <property type="match status" value="1"/>
</dbReference>
<dbReference type="PRINTS" id="PR01043">
    <property type="entry name" value="TRNASYNTHGLY"/>
</dbReference>
<dbReference type="SUPFAM" id="SSF52954">
    <property type="entry name" value="Class II aaRS ABD-related"/>
    <property type="match status" value="1"/>
</dbReference>
<dbReference type="SUPFAM" id="SSF55681">
    <property type="entry name" value="Class II aaRS and biotin synthetases"/>
    <property type="match status" value="1"/>
</dbReference>
<dbReference type="PROSITE" id="PS50862">
    <property type="entry name" value="AA_TRNA_LIGASE_II"/>
    <property type="match status" value="1"/>
</dbReference>
<proteinExistence type="inferred from homology"/>
<accession>Q8CSD5</accession>
<comment type="function">
    <text evidence="1">Catalyzes the attachment of glycine to tRNA(Gly).</text>
</comment>
<comment type="catalytic activity">
    <reaction evidence="1">
        <text>tRNA(Gly) + glycine + ATP = glycyl-tRNA(Gly) + AMP + diphosphate</text>
        <dbReference type="Rhea" id="RHEA:16013"/>
        <dbReference type="Rhea" id="RHEA-COMP:9664"/>
        <dbReference type="Rhea" id="RHEA-COMP:9683"/>
        <dbReference type="ChEBI" id="CHEBI:30616"/>
        <dbReference type="ChEBI" id="CHEBI:33019"/>
        <dbReference type="ChEBI" id="CHEBI:57305"/>
        <dbReference type="ChEBI" id="CHEBI:78442"/>
        <dbReference type="ChEBI" id="CHEBI:78522"/>
        <dbReference type="ChEBI" id="CHEBI:456215"/>
        <dbReference type="EC" id="6.1.1.14"/>
    </reaction>
</comment>
<comment type="subunit">
    <text evidence="1">Homodimer.</text>
</comment>
<comment type="subcellular location">
    <subcellularLocation>
        <location evidence="1">Cytoplasm</location>
    </subcellularLocation>
</comment>
<comment type="similarity">
    <text evidence="1">Belongs to the class-II aminoacyl-tRNA synthetase family.</text>
</comment>
<gene>
    <name evidence="1" type="primary">glyQS</name>
    <name type="ordered locus">SE_1252</name>
</gene>
<protein>
    <recommendedName>
        <fullName evidence="1">Glycine--tRNA ligase</fullName>
        <ecNumber evidence="1">6.1.1.14</ecNumber>
    </recommendedName>
    <alternativeName>
        <fullName evidence="1">Glycyl-tRNA synthetase</fullName>
        <shortName evidence="1">GlyRS</shortName>
    </alternativeName>
</protein>
<reference key="1">
    <citation type="journal article" date="2003" name="Mol. Microbiol.">
        <title>Genome-based analysis of virulence genes in a non-biofilm-forming Staphylococcus epidermidis strain (ATCC 12228).</title>
        <authorList>
            <person name="Zhang Y.-Q."/>
            <person name="Ren S.-X."/>
            <person name="Li H.-L."/>
            <person name="Wang Y.-X."/>
            <person name="Fu G."/>
            <person name="Yang J."/>
            <person name="Qin Z.-Q."/>
            <person name="Miao Y.-G."/>
            <person name="Wang W.-Y."/>
            <person name="Chen R.-S."/>
            <person name="Shen Y."/>
            <person name="Chen Z."/>
            <person name="Yuan Z.-H."/>
            <person name="Zhao G.-P."/>
            <person name="Qu D."/>
            <person name="Danchin A."/>
            <person name="Wen Y.-M."/>
        </authorList>
    </citation>
    <scope>NUCLEOTIDE SEQUENCE [LARGE SCALE GENOMIC DNA]</scope>
    <source>
        <strain>ATCC 12228 / FDA PCI 1200</strain>
    </source>
</reference>
<feature type="chain" id="PRO_0000072978" description="Glycine--tRNA ligase">
    <location>
        <begin position="1"/>
        <end position="463"/>
    </location>
</feature>
<feature type="binding site" evidence="1">
    <location>
        <position position="98"/>
    </location>
    <ligand>
        <name>substrate</name>
    </ligand>
</feature>
<feature type="binding site" evidence="1">
    <location>
        <position position="174"/>
    </location>
    <ligand>
        <name>substrate</name>
    </ligand>
</feature>
<feature type="binding site" evidence="1">
    <location>
        <begin position="206"/>
        <end position="208"/>
    </location>
    <ligand>
        <name>ATP</name>
        <dbReference type="ChEBI" id="CHEBI:30616"/>
    </ligand>
</feature>
<feature type="binding site" evidence="1">
    <location>
        <begin position="216"/>
        <end position="221"/>
    </location>
    <ligand>
        <name>ATP</name>
        <dbReference type="ChEBI" id="CHEBI:30616"/>
    </ligand>
</feature>
<feature type="binding site" evidence="1">
    <location>
        <begin position="221"/>
        <end position="225"/>
    </location>
    <ligand>
        <name>substrate</name>
    </ligand>
</feature>
<feature type="binding site" evidence="1">
    <location>
        <begin position="290"/>
        <end position="291"/>
    </location>
    <ligand>
        <name>ATP</name>
        <dbReference type="ChEBI" id="CHEBI:30616"/>
    </ligand>
</feature>
<feature type="binding site" evidence="1">
    <location>
        <begin position="330"/>
        <end position="334"/>
    </location>
    <ligand>
        <name>substrate</name>
    </ligand>
</feature>
<feature type="binding site" evidence="1">
    <location>
        <begin position="334"/>
        <end position="337"/>
    </location>
    <ligand>
        <name>ATP</name>
        <dbReference type="ChEBI" id="CHEBI:30616"/>
    </ligand>
</feature>
<organism>
    <name type="scientific">Staphylococcus epidermidis (strain ATCC 12228 / FDA PCI 1200)</name>
    <dbReference type="NCBI Taxonomy" id="176280"/>
    <lineage>
        <taxon>Bacteria</taxon>
        <taxon>Bacillati</taxon>
        <taxon>Bacillota</taxon>
        <taxon>Bacilli</taxon>
        <taxon>Bacillales</taxon>
        <taxon>Staphylococcaceae</taxon>
        <taxon>Staphylococcus</taxon>
    </lineage>
</organism>
<name>SYG_STAES</name>
<sequence length="463" mass="53666">MVKNMDTIVQLAKHRGFVFPGSDIYGGLSNTWDYGPLGVELKNNIKKAWWQKFITQSPYNVGIDAAILMNPKTWEASGHLGNFNDPMIDNKDSKIRYRADKLIEDYMQNEKGDENFIADGLSFDEMKKIIDDEGIVCPVSKTANWTDIRQFNLMFKTFQGVTEDSTNELFLRPETAQGIFVNYKNVQRSMRKKLPFGIGQIGKSFRNEITPGNFIFRTREFEQMELEFFCKPGEEIEWQNYWKTFASEWLTDLNISEDNMRLRDHDEDELSHYSNATTDIEYKFPFGWGELWGIASRTDYDLRQHSEHSGEDFKYHDPETNEKYIPYCIEPSLGADRVTLAFLCDAYAEEGVEGSKDARTVMHFHPALAPYKAAVLPLSKKLSSEAIKIFEQLSSSFAIDFDESQSIGKRYRRQDEIGTPYCITFDFDSLEDNQVTVRDRDSMEQVRMPISELETFLAEKVKF</sequence>
<keyword id="KW-0030">Aminoacyl-tRNA synthetase</keyword>
<keyword id="KW-0067">ATP-binding</keyword>
<keyword id="KW-0963">Cytoplasm</keyword>
<keyword id="KW-0436">Ligase</keyword>
<keyword id="KW-0547">Nucleotide-binding</keyword>
<keyword id="KW-0648">Protein biosynthesis</keyword>